<accession>A4YSL4</accession>
<sequence length="122" mass="13841">MARIAGVNIPTNKRVLIALQYIHGIGPKIAGEIIEKVKIAEDRRVNQLSDQEVLQIREIIDRDYVVEGDLRRETGINIKRLMDLGCYRGLRHRRGLPVRGQRTHTNARTRKGPAKAIAGKKK</sequence>
<organism>
    <name type="scientific">Bradyrhizobium sp. (strain ORS 278)</name>
    <dbReference type="NCBI Taxonomy" id="114615"/>
    <lineage>
        <taxon>Bacteria</taxon>
        <taxon>Pseudomonadati</taxon>
        <taxon>Pseudomonadota</taxon>
        <taxon>Alphaproteobacteria</taxon>
        <taxon>Hyphomicrobiales</taxon>
        <taxon>Nitrobacteraceae</taxon>
        <taxon>Bradyrhizobium</taxon>
    </lineage>
</organism>
<reference key="1">
    <citation type="journal article" date="2007" name="Science">
        <title>Legumes symbioses: absence of nod genes in photosynthetic bradyrhizobia.</title>
        <authorList>
            <person name="Giraud E."/>
            <person name="Moulin L."/>
            <person name="Vallenet D."/>
            <person name="Barbe V."/>
            <person name="Cytryn E."/>
            <person name="Avarre J.-C."/>
            <person name="Jaubert M."/>
            <person name="Simon D."/>
            <person name="Cartieaux F."/>
            <person name="Prin Y."/>
            <person name="Bena G."/>
            <person name="Hannibal L."/>
            <person name="Fardoux J."/>
            <person name="Kojadinovic M."/>
            <person name="Vuillet L."/>
            <person name="Lajus A."/>
            <person name="Cruveiller S."/>
            <person name="Rouy Z."/>
            <person name="Mangenot S."/>
            <person name="Segurens B."/>
            <person name="Dossat C."/>
            <person name="Franck W.L."/>
            <person name="Chang W.-S."/>
            <person name="Saunders E."/>
            <person name="Bruce D."/>
            <person name="Richardson P."/>
            <person name="Normand P."/>
            <person name="Dreyfus B."/>
            <person name="Pignol D."/>
            <person name="Stacey G."/>
            <person name="Emerich D."/>
            <person name="Vermeglio A."/>
            <person name="Medigue C."/>
            <person name="Sadowsky M."/>
        </authorList>
    </citation>
    <scope>NUCLEOTIDE SEQUENCE [LARGE SCALE GENOMIC DNA]</scope>
    <source>
        <strain>ORS 278</strain>
    </source>
</reference>
<keyword id="KW-1185">Reference proteome</keyword>
<keyword id="KW-0687">Ribonucleoprotein</keyword>
<keyword id="KW-0689">Ribosomal protein</keyword>
<keyword id="KW-0694">RNA-binding</keyword>
<keyword id="KW-0699">rRNA-binding</keyword>
<keyword id="KW-0820">tRNA-binding</keyword>
<name>RS13_BRASO</name>
<protein>
    <recommendedName>
        <fullName evidence="1">Small ribosomal subunit protein uS13</fullName>
    </recommendedName>
    <alternativeName>
        <fullName evidence="3">30S ribosomal protein S13</fullName>
    </alternativeName>
</protein>
<evidence type="ECO:0000255" key="1">
    <source>
        <dbReference type="HAMAP-Rule" id="MF_01315"/>
    </source>
</evidence>
<evidence type="ECO:0000256" key="2">
    <source>
        <dbReference type="SAM" id="MobiDB-lite"/>
    </source>
</evidence>
<evidence type="ECO:0000305" key="3"/>
<gene>
    <name evidence="1" type="primary">rpsM</name>
    <name type="ordered locus">BRADO3088</name>
</gene>
<proteinExistence type="inferred from homology"/>
<comment type="function">
    <text evidence="1">Located at the top of the head of the 30S subunit, it contacts several helices of the 16S rRNA. In the 70S ribosome it contacts the 23S rRNA (bridge B1a) and protein L5 of the 50S subunit (bridge B1b), connecting the 2 subunits; these bridges are implicated in subunit movement. Contacts the tRNAs in the A and P-sites.</text>
</comment>
<comment type="subunit">
    <text evidence="1">Part of the 30S ribosomal subunit. Forms a loose heterodimer with protein S19. Forms two bridges to the 50S subunit in the 70S ribosome.</text>
</comment>
<comment type="similarity">
    <text evidence="1">Belongs to the universal ribosomal protein uS13 family.</text>
</comment>
<dbReference type="EMBL" id="CU234118">
    <property type="protein sequence ID" value="CAL76890.1"/>
    <property type="molecule type" value="Genomic_DNA"/>
</dbReference>
<dbReference type="RefSeq" id="WP_008963796.1">
    <property type="nucleotide sequence ID" value="NC_009445.1"/>
</dbReference>
<dbReference type="SMR" id="A4YSL4"/>
<dbReference type="STRING" id="114615.BRADO3088"/>
<dbReference type="KEGG" id="bra:BRADO3088"/>
<dbReference type="eggNOG" id="COG0099">
    <property type="taxonomic scope" value="Bacteria"/>
</dbReference>
<dbReference type="HOGENOM" id="CLU_103849_1_2_5"/>
<dbReference type="OrthoDB" id="9803610at2"/>
<dbReference type="Proteomes" id="UP000001994">
    <property type="component" value="Chromosome"/>
</dbReference>
<dbReference type="GO" id="GO:0005829">
    <property type="term" value="C:cytosol"/>
    <property type="evidence" value="ECO:0007669"/>
    <property type="project" value="TreeGrafter"/>
</dbReference>
<dbReference type="GO" id="GO:0015935">
    <property type="term" value="C:small ribosomal subunit"/>
    <property type="evidence" value="ECO:0007669"/>
    <property type="project" value="TreeGrafter"/>
</dbReference>
<dbReference type="GO" id="GO:0019843">
    <property type="term" value="F:rRNA binding"/>
    <property type="evidence" value="ECO:0007669"/>
    <property type="project" value="UniProtKB-UniRule"/>
</dbReference>
<dbReference type="GO" id="GO:0003735">
    <property type="term" value="F:structural constituent of ribosome"/>
    <property type="evidence" value="ECO:0007669"/>
    <property type="project" value="InterPro"/>
</dbReference>
<dbReference type="GO" id="GO:0000049">
    <property type="term" value="F:tRNA binding"/>
    <property type="evidence" value="ECO:0007669"/>
    <property type="project" value="UniProtKB-UniRule"/>
</dbReference>
<dbReference type="GO" id="GO:0006412">
    <property type="term" value="P:translation"/>
    <property type="evidence" value="ECO:0007669"/>
    <property type="project" value="UniProtKB-UniRule"/>
</dbReference>
<dbReference type="FunFam" id="1.10.8.50:FF:000001">
    <property type="entry name" value="30S ribosomal protein S13"/>
    <property type="match status" value="1"/>
</dbReference>
<dbReference type="FunFam" id="4.10.910.10:FF:000001">
    <property type="entry name" value="30S ribosomal protein S13"/>
    <property type="match status" value="1"/>
</dbReference>
<dbReference type="Gene3D" id="1.10.8.50">
    <property type="match status" value="1"/>
</dbReference>
<dbReference type="Gene3D" id="4.10.910.10">
    <property type="entry name" value="30s ribosomal protein s13, domain 2"/>
    <property type="match status" value="1"/>
</dbReference>
<dbReference type="HAMAP" id="MF_01315">
    <property type="entry name" value="Ribosomal_uS13"/>
    <property type="match status" value="1"/>
</dbReference>
<dbReference type="InterPro" id="IPR027437">
    <property type="entry name" value="Rbsml_uS13_C"/>
</dbReference>
<dbReference type="InterPro" id="IPR001892">
    <property type="entry name" value="Ribosomal_uS13"/>
</dbReference>
<dbReference type="InterPro" id="IPR010979">
    <property type="entry name" value="Ribosomal_uS13-like_H2TH"/>
</dbReference>
<dbReference type="InterPro" id="IPR019980">
    <property type="entry name" value="Ribosomal_uS13_bac-type"/>
</dbReference>
<dbReference type="InterPro" id="IPR018269">
    <property type="entry name" value="Ribosomal_uS13_CS"/>
</dbReference>
<dbReference type="NCBIfam" id="TIGR03631">
    <property type="entry name" value="uS13_bact"/>
    <property type="match status" value="1"/>
</dbReference>
<dbReference type="PANTHER" id="PTHR10871">
    <property type="entry name" value="30S RIBOSOMAL PROTEIN S13/40S RIBOSOMAL PROTEIN S18"/>
    <property type="match status" value="1"/>
</dbReference>
<dbReference type="PANTHER" id="PTHR10871:SF1">
    <property type="entry name" value="SMALL RIBOSOMAL SUBUNIT PROTEIN US13M"/>
    <property type="match status" value="1"/>
</dbReference>
<dbReference type="Pfam" id="PF00416">
    <property type="entry name" value="Ribosomal_S13"/>
    <property type="match status" value="1"/>
</dbReference>
<dbReference type="PIRSF" id="PIRSF002134">
    <property type="entry name" value="Ribosomal_S13"/>
    <property type="match status" value="1"/>
</dbReference>
<dbReference type="SUPFAM" id="SSF46946">
    <property type="entry name" value="S13-like H2TH domain"/>
    <property type="match status" value="1"/>
</dbReference>
<dbReference type="PROSITE" id="PS00646">
    <property type="entry name" value="RIBOSOMAL_S13_1"/>
    <property type="match status" value="1"/>
</dbReference>
<dbReference type="PROSITE" id="PS50159">
    <property type="entry name" value="RIBOSOMAL_S13_2"/>
    <property type="match status" value="1"/>
</dbReference>
<feature type="chain" id="PRO_0000306572" description="Small ribosomal subunit protein uS13">
    <location>
        <begin position="1"/>
        <end position="122"/>
    </location>
</feature>
<feature type="region of interest" description="Disordered" evidence="2">
    <location>
        <begin position="99"/>
        <end position="122"/>
    </location>
</feature>